<keyword id="KW-0678">Repressor</keyword>
<keyword id="KW-0346">Stress response</keyword>
<keyword id="KW-0804">Transcription</keyword>
<keyword id="KW-0805">Transcription regulation</keyword>
<protein>
    <recommendedName>
        <fullName evidence="1">Heat-inducible transcription repressor HrcA</fullName>
    </recommendedName>
</protein>
<gene>
    <name evidence="1" type="primary">hrcA</name>
    <name type="ordered locus">BT9727_4053</name>
</gene>
<dbReference type="EMBL" id="AE017355">
    <property type="protein sequence ID" value="AAT63558.1"/>
    <property type="molecule type" value="Genomic_DNA"/>
</dbReference>
<dbReference type="RefSeq" id="WP_000954957.1">
    <property type="nucleotide sequence ID" value="NC_005957.1"/>
</dbReference>
<dbReference type="RefSeq" id="YP_038371.1">
    <property type="nucleotide sequence ID" value="NC_005957.1"/>
</dbReference>
<dbReference type="SMR" id="Q6HDK5"/>
<dbReference type="KEGG" id="btk:BT9727_4053"/>
<dbReference type="PATRIC" id="fig|281309.8.peg.4325"/>
<dbReference type="HOGENOM" id="CLU_050019_1_0_9"/>
<dbReference type="Proteomes" id="UP000001301">
    <property type="component" value="Chromosome"/>
</dbReference>
<dbReference type="GO" id="GO:0003677">
    <property type="term" value="F:DNA binding"/>
    <property type="evidence" value="ECO:0007669"/>
    <property type="project" value="InterPro"/>
</dbReference>
<dbReference type="GO" id="GO:0045892">
    <property type="term" value="P:negative regulation of DNA-templated transcription"/>
    <property type="evidence" value="ECO:0007669"/>
    <property type="project" value="UniProtKB-UniRule"/>
</dbReference>
<dbReference type="FunFam" id="1.10.10.10:FF:000049">
    <property type="entry name" value="Heat-inducible transcription repressor HrcA"/>
    <property type="match status" value="1"/>
</dbReference>
<dbReference type="FunFam" id="3.30.390.60:FF:000001">
    <property type="entry name" value="Heat-inducible transcription repressor HrcA"/>
    <property type="match status" value="1"/>
</dbReference>
<dbReference type="Gene3D" id="3.30.450.40">
    <property type="match status" value="1"/>
</dbReference>
<dbReference type="Gene3D" id="3.30.390.60">
    <property type="entry name" value="Heat-inducible transcription repressor hrca homolog, domain 3"/>
    <property type="match status" value="1"/>
</dbReference>
<dbReference type="Gene3D" id="1.10.10.10">
    <property type="entry name" value="Winged helix-like DNA-binding domain superfamily/Winged helix DNA-binding domain"/>
    <property type="match status" value="1"/>
</dbReference>
<dbReference type="HAMAP" id="MF_00081">
    <property type="entry name" value="HrcA"/>
    <property type="match status" value="1"/>
</dbReference>
<dbReference type="InterPro" id="IPR029016">
    <property type="entry name" value="GAF-like_dom_sf"/>
</dbReference>
<dbReference type="InterPro" id="IPR002571">
    <property type="entry name" value="HrcA"/>
</dbReference>
<dbReference type="InterPro" id="IPR021153">
    <property type="entry name" value="HrcA_C"/>
</dbReference>
<dbReference type="InterPro" id="IPR036388">
    <property type="entry name" value="WH-like_DNA-bd_sf"/>
</dbReference>
<dbReference type="InterPro" id="IPR036390">
    <property type="entry name" value="WH_DNA-bd_sf"/>
</dbReference>
<dbReference type="InterPro" id="IPR023120">
    <property type="entry name" value="WHTH_transcript_rep_HrcA_IDD"/>
</dbReference>
<dbReference type="NCBIfam" id="TIGR00331">
    <property type="entry name" value="hrcA"/>
    <property type="match status" value="1"/>
</dbReference>
<dbReference type="PANTHER" id="PTHR34824">
    <property type="entry name" value="HEAT-INDUCIBLE TRANSCRIPTION REPRESSOR HRCA"/>
    <property type="match status" value="1"/>
</dbReference>
<dbReference type="PANTHER" id="PTHR34824:SF1">
    <property type="entry name" value="HEAT-INDUCIBLE TRANSCRIPTION REPRESSOR HRCA"/>
    <property type="match status" value="1"/>
</dbReference>
<dbReference type="Pfam" id="PF01628">
    <property type="entry name" value="HrcA"/>
    <property type="match status" value="1"/>
</dbReference>
<dbReference type="PIRSF" id="PIRSF005485">
    <property type="entry name" value="HrcA"/>
    <property type="match status" value="1"/>
</dbReference>
<dbReference type="SUPFAM" id="SSF55781">
    <property type="entry name" value="GAF domain-like"/>
    <property type="match status" value="1"/>
</dbReference>
<dbReference type="SUPFAM" id="SSF46785">
    <property type="entry name" value="Winged helix' DNA-binding domain"/>
    <property type="match status" value="1"/>
</dbReference>
<sequence>MLTERQLLILQTIIDDFIGSAQPVGSRTLAKKDEITYSSATIRNEMADLEELGFIEKTHSSSGRVPSEKGYRFYVDHLLAPQNLPNDEIVQIKDLFAERIFEAEKIAQQSAQILSELTNYTAIVLGPKLSTNKLKNVQIVPLDRQTAVAIIVTDTGHVQSKTITVPESVDLSDLEKMVNILNEKLSGVPMSELHNKIFKEIVTVLRGYVHNYDSAIKMLDGTFQVPLSEKIYFGGKANMLSQPEFHDIHKVRSLLTMIDNEAEFYDILRHKQVGIQVKIGRENSATAMEDCSLISATYSIGEEQLGTIAILGPTRMQYSRVISLLQLFTRQFTDGLKK</sequence>
<comment type="function">
    <text evidence="1">Negative regulator of class I heat shock genes (grpE-dnaK-dnaJ and groELS operons). Prevents heat-shock induction of these operons.</text>
</comment>
<comment type="similarity">
    <text evidence="1">Belongs to the HrcA family.</text>
</comment>
<reference key="1">
    <citation type="journal article" date="2006" name="J. Bacteriol.">
        <title>Pathogenomic sequence analysis of Bacillus cereus and Bacillus thuringiensis isolates closely related to Bacillus anthracis.</title>
        <authorList>
            <person name="Han C.S."/>
            <person name="Xie G."/>
            <person name="Challacombe J.F."/>
            <person name="Altherr M.R."/>
            <person name="Bhotika S.S."/>
            <person name="Bruce D."/>
            <person name="Campbell C.S."/>
            <person name="Campbell M.L."/>
            <person name="Chen J."/>
            <person name="Chertkov O."/>
            <person name="Cleland C."/>
            <person name="Dimitrijevic M."/>
            <person name="Doggett N.A."/>
            <person name="Fawcett J.J."/>
            <person name="Glavina T."/>
            <person name="Goodwin L.A."/>
            <person name="Hill K.K."/>
            <person name="Hitchcock P."/>
            <person name="Jackson P.J."/>
            <person name="Keim P."/>
            <person name="Kewalramani A.R."/>
            <person name="Longmire J."/>
            <person name="Lucas S."/>
            <person name="Malfatti S."/>
            <person name="McMurry K."/>
            <person name="Meincke L.J."/>
            <person name="Misra M."/>
            <person name="Moseman B.L."/>
            <person name="Mundt M."/>
            <person name="Munk A.C."/>
            <person name="Okinaka R.T."/>
            <person name="Parson-Quintana B."/>
            <person name="Reilly L.P."/>
            <person name="Richardson P."/>
            <person name="Robinson D.L."/>
            <person name="Rubin E."/>
            <person name="Saunders E."/>
            <person name="Tapia R."/>
            <person name="Tesmer J.G."/>
            <person name="Thayer N."/>
            <person name="Thompson L.S."/>
            <person name="Tice H."/>
            <person name="Ticknor L.O."/>
            <person name="Wills P.L."/>
            <person name="Brettin T.S."/>
            <person name="Gilna P."/>
        </authorList>
    </citation>
    <scope>NUCLEOTIDE SEQUENCE [LARGE SCALE GENOMIC DNA]</scope>
    <source>
        <strain>97-27</strain>
    </source>
</reference>
<feature type="chain" id="PRO_0000182445" description="Heat-inducible transcription repressor HrcA">
    <location>
        <begin position="1"/>
        <end position="338"/>
    </location>
</feature>
<organism>
    <name type="scientific">Bacillus thuringiensis subsp. konkukian (strain 97-27)</name>
    <dbReference type="NCBI Taxonomy" id="281309"/>
    <lineage>
        <taxon>Bacteria</taxon>
        <taxon>Bacillati</taxon>
        <taxon>Bacillota</taxon>
        <taxon>Bacilli</taxon>
        <taxon>Bacillales</taxon>
        <taxon>Bacillaceae</taxon>
        <taxon>Bacillus</taxon>
        <taxon>Bacillus cereus group</taxon>
    </lineage>
</organism>
<evidence type="ECO:0000255" key="1">
    <source>
        <dbReference type="HAMAP-Rule" id="MF_00081"/>
    </source>
</evidence>
<name>HRCA_BACHK</name>
<accession>Q6HDK5</accession>
<proteinExistence type="inferred from homology"/>